<feature type="chain" id="PRO_1000129699" description="Co-chaperonin GroES">
    <location>
        <begin position="1"/>
        <end position="97"/>
    </location>
</feature>
<proteinExistence type="inferred from homology"/>
<comment type="function">
    <text evidence="1">Together with the chaperonin GroEL, plays an essential role in assisting protein folding. The GroEL-GroES system forms a nano-cage that allows encapsulation of the non-native substrate proteins and provides a physical environment optimized to promote and accelerate protein folding. GroES binds to the apical surface of the GroEL ring, thereby capping the opening of the GroEL channel.</text>
</comment>
<comment type="subunit">
    <text evidence="1">Heptamer of 7 subunits arranged in a ring. Interacts with the chaperonin GroEL.</text>
</comment>
<comment type="subcellular location">
    <subcellularLocation>
        <location evidence="1">Cytoplasm</location>
    </subcellularLocation>
</comment>
<comment type="similarity">
    <text evidence="1">Belongs to the GroES chaperonin family.</text>
</comment>
<dbReference type="EMBL" id="CP001144">
    <property type="protein sequence ID" value="ACH75701.1"/>
    <property type="molecule type" value="Genomic_DNA"/>
</dbReference>
<dbReference type="RefSeq" id="WP_000027827.1">
    <property type="nucleotide sequence ID" value="NC_011205.1"/>
</dbReference>
<dbReference type="SMR" id="B5FRK1"/>
<dbReference type="KEGG" id="sed:SeD_A4726"/>
<dbReference type="HOGENOM" id="CLU_132825_1_1_6"/>
<dbReference type="Proteomes" id="UP000008322">
    <property type="component" value="Chromosome"/>
</dbReference>
<dbReference type="GO" id="GO:0005737">
    <property type="term" value="C:cytoplasm"/>
    <property type="evidence" value="ECO:0007669"/>
    <property type="project" value="UniProtKB-SubCell"/>
</dbReference>
<dbReference type="GO" id="GO:0005524">
    <property type="term" value="F:ATP binding"/>
    <property type="evidence" value="ECO:0007669"/>
    <property type="project" value="InterPro"/>
</dbReference>
<dbReference type="GO" id="GO:0046872">
    <property type="term" value="F:metal ion binding"/>
    <property type="evidence" value="ECO:0007669"/>
    <property type="project" value="TreeGrafter"/>
</dbReference>
<dbReference type="GO" id="GO:0044183">
    <property type="term" value="F:protein folding chaperone"/>
    <property type="evidence" value="ECO:0007669"/>
    <property type="project" value="InterPro"/>
</dbReference>
<dbReference type="GO" id="GO:0051087">
    <property type="term" value="F:protein-folding chaperone binding"/>
    <property type="evidence" value="ECO:0007669"/>
    <property type="project" value="TreeGrafter"/>
</dbReference>
<dbReference type="GO" id="GO:0051082">
    <property type="term" value="F:unfolded protein binding"/>
    <property type="evidence" value="ECO:0007669"/>
    <property type="project" value="TreeGrafter"/>
</dbReference>
<dbReference type="GO" id="GO:0051085">
    <property type="term" value="P:chaperone cofactor-dependent protein refolding"/>
    <property type="evidence" value="ECO:0007669"/>
    <property type="project" value="TreeGrafter"/>
</dbReference>
<dbReference type="CDD" id="cd00320">
    <property type="entry name" value="cpn10"/>
    <property type="match status" value="1"/>
</dbReference>
<dbReference type="FunFam" id="2.30.33.40:FF:000001">
    <property type="entry name" value="10 kDa chaperonin"/>
    <property type="match status" value="1"/>
</dbReference>
<dbReference type="Gene3D" id="2.30.33.40">
    <property type="entry name" value="GroES chaperonin"/>
    <property type="match status" value="1"/>
</dbReference>
<dbReference type="HAMAP" id="MF_00580">
    <property type="entry name" value="CH10"/>
    <property type="match status" value="1"/>
</dbReference>
<dbReference type="InterPro" id="IPR020818">
    <property type="entry name" value="Chaperonin_GroES"/>
</dbReference>
<dbReference type="InterPro" id="IPR037124">
    <property type="entry name" value="Chaperonin_GroES_sf"/>
</dbReference>
<dbReference type="InterPro" id="IPR018369">
    <property type="entry name" value="Chaprnonin_Cpn10_CS"/>
</dbReference>
<dbReference type="InterPro" id="IPR011032">
    <property type="entry name" value="GroES-like_sf"/>
</dbReference>
<dbReference type="NCBIfam" id="NF001526">
    <property type="entry name" value="PRK00364.1-1"/>
    <property type="match status" value="1"/>
</dbReference>
<dbReference type="NCBIfam" id="NF001527">
    <property type="entry name" value="PRK00364.1-2"/>
    <property type="match status" value="1"/>
</dbReference>
<dbReference type="NCBIfam" id="NF001531">
    <property type="entry name" value="PRK00364.2-2"/>
    <property type="match status" value="1"/>
</dbReference>
<dbReference type="PANTHER" id="PTHR10772">
    <property type="entry name" value="10 KDA HEAT SHOCK PROTEIN"/>
    <property type="match status" value="1"/>
</dbReference>
<dbReference type="PANTHER" id="PTHR10772:SF58">
    <property type="entry name" value="CO-CHAPERONIN GROES"/>
    <property type="match status" value="1"/>
</dbReference>
<dbReference type="Pfam" id="PF00166">
    <property type="entry name" value="Cpn10"/>
    <property type="match status" value="1"/>
</dbReference>
<dbReference type="PRINTS" id="PR00297">
    <property type="entry name" value="CHAPERONIN10"/>
</dbReference>
<dbReference type="SMART" id="SM00883">
    <property type="entry name" value="Cpn10"/>
    <property type="match status" value="1"/>
</dbReference>
<dbReference type="SUPFAM" id="SSF50129">
    <property type="entry name" value="GroES-like"/>
    <property type="match status" value="1"/>
</dbReference>
<dbReference type="PROSITE" id="PS00681">
    <property type="entry name" value="CHAPERONINS_CPN10"/>
    <property type="match status" value="1"/>
</dbReference>
<gene>
    <name evidence="1" type="primary">groES</name>
    <name evidence="1" type="synonym">groS</name>
    <name type="ordered locus">SeD_A4726</name>
</gene>
<keyword id="KW-0143">Chaperone</keyword>
<keyword id="KW-0963">Cytoplasm</keyword>
<sequence>MSIRPLHDRVIVKRKEVESKSAGGIVLTGSAAGKSTRGEIIAVGKGRILDNGTVQPLDVKVGDIVIFNDGYGVKSEKIDNEEVLIMSESDILAIVEA</sequence>
<reference key="1">
    <citation type="journal article" date="2011" name="J. Bacteriol.">
        <title>Comparative genomics of 28 Salmonella enterica isolates: evidence for CRISPR-mediated adaptive sublineage evolution.</title>
        <authorList>
            <person name="Fricke W.F."/>
            <person name="Mammel M.K."/>
            <person name="McDermott P.F."/>
            <person name="Tartera C."/>
            <person name="White D.G."/>
            <person name="Leclerc J.E."/>
            <person name="Ravel J."/>
            <person name="Cebula T.A."/>
        </authorList>
    </citation>
    <scope>NUCLEOTIDE SEQUENCE [LARGE SCALE GENOMIC DNA]</scope>
    <source>
        <strain>CT_02021853</strain>
    </source>
</reference>
<organism>
    <name type="scientific">Salmonella dublin (strain CT_02021853)</name>
    <dbReference type="NCBI Taxonomy" id="439851"/>
    <lineage>
        <taxon>Bacteria</taxon>
        <taxon>Pseudomonadati</taxon>
        <taxon>Pseudomonadota</taxon>
        <taxon>Gammaproteobacteria</taxon>
        <taxon>Enterobacterales</taxon>
        <taxon>Enterobacteriaceae</taxon>
        <taxon>Salmonella</taxon>
    </lineage>
</organism>
<evidence type="ECO:0000255" key="1">
    <source>
        <dbReference type="HAMAP-Rule" id="MF_00580"/>
    </source>
</evidence>
<protein>
    <recommendedName>
        <fullName evidence="1">Co-chaperonin GroES</fullName>
    </recommendedName>
    <alternativeName>
        <fullName evidence="1">10 kDa chaperonin</fullName>
    </alternativeName>
    <alternativeName>
        <fullName evidence="1">Chaperonin-10</fullName>
        <shortName evidence="1">Cpn10</shortName>
    </alternativeName>
</protein>
<accession>B5FRK1</accession>
<name>CH10_SALDC</name>